<organism>
    <name type="scientific">Canis lupus familiaris</name>
    <name type="common">Dog</name>
    <name type="synonym">Canis familiaris</name>
    <dbReference type="NCBI Taxonomy" id="9615"/>
    <lineage>
        <taxon>Eukaryota</taxon>
        <taxon>Metazoa</taxon>
        <taxon>Chordata</taxon>
        <taxon>Craniata</taxon>
        <taxon>Vertebrata</taxon>
        <taxon>Euteleostomi</taxon>
        <taxon>Mammalia</taxon>
        <taxon>Eutheria</taxon>
        <taxon>Laurasiatheria</taxon>
        <taxon>Carnivora</taxon>
        <taxon>Caniformia</taxon>
        <taxon>Canidae</taxon>
        <taxon>Canis</taxon>
    </lineage>
</organism>
<proteinExistence type="evidence at protein level"/>
<name>PEPB_CANLF</name>
<sequence>MKIQVLVLVCLHLSEGVERIILKKGKSIRQVMEERGVLETFLRNHPKVDPAAKYLFNNDAVAYEPFTNYLDSYYFGEISIGTPPQNFLILFDTGSSNLWVPSTYCQSQACSNHNRFNPSRSSTYQSSEQTYTLAYGFGSLTVLLGYDTVTVQNIVIHNQLFGMSENEPNYPFYYSYFDGILGMAYSNLAVDNGPTVLQNMMQQGQLTQPIFSFYFSPQPTYEYGGELILGGVDTQFYSGEIVWAPVTREMYWQVAIDEFLIGNQATGLCSQGCQGIVDTGTFPLTVPQQYLDSFVKATGAQQDQSGNFVVNCNSIQSMPTITFVISGSPLPLPPSTYVLNNNGYCTLGIEVTYLPSPNGQPLWILGDVFLREYYTVFDMAANRVGFALSS</sequence>
<evidence type="ECO:0000250" key="1"/>
<evidence type="ECO:0000255" key="2"/>
<evidence type="ECO:0000255" key="3">
    <source>
        <dbReference type="PROSITE-ProRule" id="PRU01103"/>
    </source>
</evidence>
<evidence type="ECO:0000255" key="4">
    <source>
        <dbReference type="PROSITE-ProRule" id="PRU10094"/>
    </source>
</evidence>
<evidence type="ECO:0000269" key="5">
    <source>
    </source>
</evidence>
<evidence type="ECO:0000305" key="6"/>
<gene>
    <name type="primary">PGB</name>
    <name type="synonym">PGNB</name>
</gene>
<reference key="1">
    <citation type="journal article" date="2002" name="Arch. Biochem. Biophys.">
        <title>Primary structure, unique enzymatic properties, and molecular evolution of pepsinogen B and pepsin B.</title>
        <authorList>
            <person name="Narita Y."/>
            <person name="Oda S."/>
            <person name="Moriyama A."/>
            <person name="Kageyama T."/>
        </authorList>
    </citation>
    <scope>NUCLEOTIDE SEQUENCE [MRNA]</scope>
    <scope>FUNCTION</scope>
    <scope>CATALYTIC ACTIVITY</scope>
    <scope>CHARACTERIZATION</scope>
</reference>
<dbReference type="EC" id="3.4.23.2" evidence="5"/>
<dbReference type="EMBL" id="AB082936">
    <property type="protein sequence ID" value="BAB86888.1"/>
    <property type="molecule type" value="mRNA"/>
</dbReference>
<dbReference type="RefSeq" id="NP_001003028.1">
    <property type="nucleotide sequence ID" value="NM_001003028.1"/>
</dbReference>
<dbReference type="SMR" id="Q8SQ41"/>
<dbReference type="STRING" id="9615.ENSCAFP00000029216"/>
<dbReference type="MEROPS" id="A01.002"/>
<dbReference type="PaxDb" id="9612-ENSCAFP00000029216"/>
<dbReference type="GeneID" id="403552"/>
<dbReference type="KEGG" id="cfa:403552"/>
<dbReference type="CTD" id="403552"/>
<dbReference type="eggNOG" id="KOG1339">
    <property type="taxonomic scope" value="Eukaryota"/>
</dbReference>
<dbReference type="InParanoid" id="Q8SQ41"/>
<dbReference type="OrthoDB" id="7466at33554"/>
<dbReference type="Proteomes" id="UP000002254">
    <property type="component" value="Unplaced"/>
</dbReference>
<dbReference type="Proteomes" id="UP000694429">
    <property type="component" value="Unplaced"/>
</dbReference>
<dbReference type="Proteomes" id="UP000694542">
    <property type="component" value="Unplaced"/>
</dbReference>
<dbReference type="Proteomes" id="UP000805418">
    <property type="component" value="Unplaced"/>
</dbReference>
<dbReference type="GO" id="GO:0005576">
    <property type="term" value="C:extracellular region"/>
    <property type="evidence" value="ECO:0007669"/>
    <property type="project" value="UniProtKB-SubCell"/>
</dbReference>
<dbReference type="GO" id="GO:0004190">
    <property type="term" value="F:aspartic-type endopeptidase activity"/>
    <property type="evidence" value="ECO:0000318"/>
    <property type="project" value="GO_Central"/>
</dbReference>
<dbReference type="GO" id="GO:0007586">
    <property type="term" value="P:digestion"/>
    <property type="evidence" value="ECO:0007669"/>
    <property type="project" value="UniProtKB-KW"/>
</dbReference>
<dbReference type="GO" id="GO:0006508">
    <property type="term" value="P:proteolysis"/>
    <property type="evidence" value="ECO:0000318"/>
    <property type="project" value="GO_Central"/>
</dbReference>
<dbReference type="FunFam" id="2.40.70.10:FF:000004">
    <property type="entry name" value="Pepsin A"/>
    <property type="match status" value="1"/>
</dbReference>
<dbReference type="FunFam" id="2.40.70.10:FF:000173">
    <property type="entry name" value="Uncharacterized protein"/>
    <property type="match status" value="1"/>
</dbReference>
<dbReference type="Gene3D" id="6.10.140.60">
    <property type="match status" value="1"/>
</dbReference>
<dbReference type="Gene3D" id="2.40.70.10">
    <property type="entry name" value="Acid Proteases"/>
    <property type="match status" value="2"/>
</dbReference>
<dbReference type="InterPro" id="IPR001461">
    <property type="entry name" value="Aspartic_peptidase_A1"/>
</dbReference>
<dbReference type="InterPro" id="IPR001969">
    <property type="entry name" value="Aspartic_peptidase_AS"/>
</dbReference>
<dbReference type="InterPro" id="IPR012848">
    <property type="entry name" value="Aspartic_peptidase_N"/>
</dbReference>
<dbReference type="InterPro" id="IPR033121">
    <property type="entry name" value="PEPTIDASE_A1"/>
</dbReference>
<dbReference type="InterPro" id="IPR021109">
    <property type="entry name" value="Peptidase_aspartic_dom_sf"/>
</dbReference>
<dbReference type="PANTHER" id="PTHR47966">
    <property type="entry name" value="BETA-SITE APP-CLEAVING ENZYME, ISOFORM A-RELATED"/>
    <property type="match status" value="1"/>
</dbReference>
<dbReference type="PANTHER" id="PTHR47966:SF70">
    <property type="entry name" value="PEPTIDASE A1 DOMAIN-CONTAINING PROTEIN"/>
    <property type="match status" value="1"/>
</dbReference>
<dbReference type="Pfam" id="PF07966">
    <property type="entry name" value="A1_Propeptide"/>
    <property type="match status" value="1"/>
</dbReference>
<dbReference type="Pfam" id="PF00026">
    <property type="entry name" value="Asp"/>
    <property type="match status" value="1"/>
</dbReference>
<dbReference type="PRINTS" id="PR00792">
    <property type="entry name" value="PEPSIN"/>
</dbReference>
<dbReference type="SUPFAM" id="SSF50630">
    <property type="entry name" value="Acid proteases"/>
    <property type="match status" value="1"/>
</dbReference>
<dbReference type="PROSITE" id="PS00141">
    <property type="entry name" value="ASP_PROTEASE"/>
    <property type="match status" value="1"/>
</dbReference>
<dbReference type="PROSITE" id="PS51767">
    <property type="entry name" value="PEPTIDASE_A1"/>
    <property type="match status" value="1"/>
</dbReference>
<protein>
    <recommendedName>
        <fullName>Pepsin B</fullName>
        <ecNumber evidence="5">3.4.23.2</ecNumber>
    </recommendedName>
</protein>
<accession>Q8SQ41</accession>
<comment type="function">
    <text evidence="5">Hydrolyzes various peptides including beta-endorphin, insulin B chain, dynorphin A, and neurokinin A, with high specificity for the cleavage of the Phe-Xaa bonds.</text>
</comment>
<comment type="catalytic activity">
    <reaction evidence="5">
        <text>Degradation of gelatin, little activity on hemoglobin. Specificity on B chain of insulin more restricted than that of pepsin A. Does not cleave 1-Phe-|-Val-2, 4-Gln-|-His-5 or 23-Gly-|-Phe-24.</text>
        <dbReference type="EC" id="3.4.23.2"/>
    </reaction>
</comment>
<comment type="subcellular location">
    <subcellularLocation>
        <location>Secreted</location>
    </subcellularLocation>
</comment>
<comment type="similarity">
    <text evidence="6">Belongs to the peptidase A1 family.</text>
</comment>
<keyword id="KW-0064">Aspartyl protease</keyword>
<keyword id="KW-0222">Digestion</keyword>
<keyword id="KW-1015">Disulfide bond</keyword>
<keyword id="KW-0378">Hydrolase</keyword>
<keyword id="KW-0645">Protease</keyword>
<keyword id="KW-1185">Reference proteome</keyword>
<keyword id="KW-0964">Secreted</keyword>
<keyword id="KW-0732">Signal</keyword>
<keyword id="KW-0865">Zymogen</keyword>
<feature type="signal peptide" evidence="2">
    <location>
        <begin position="1"/>
        <end position="16"/>
    </location>
</feature>
<feature type="propeptide" id="PRO_0000026048" description="Activation peptide">
    <location>
        <begin position="17"/>
        <end position="59"/>
    </location>
</feature>
<feature type="chain" id="PRO_0000026049" description="Pepsin B">
    <location>
        <begin position="60"/>
        <end position="390"/>
    </location>
</feature>
<feature type="domain" description="Peptidase A1" evidence="3">
    <location>
        <begin position="74"/>
        <end position="387"/>
    </location>
</feature>
<feature type="active site" evidence="4">
    <location>
        <position position="92"/>
    </location>
</feature>
<feature type="active site" evidence="4">
    <location>
        <position position="278"/>
    </location>
</feature>
<feature type="disulfide bond" evidence="1">
    <location>
        <begin position="105"/>
        <end position="110"/>
    </location>
</feature>
<feature type="disulfide bond" evidence="1">
    <location>
        <begin position="269"/>
        <end position="273"/>
    </location>
</feature>
<feature type="disulfide bond" evidence="1">
    <location>
        <begin position="312"/>
        <end position="345"/>
    </location>
</feature>